<evidence type="ECO:0000256" key="1">
    <source>
        <dbReference type="SAM" id="MobiDB-lite"/>
    </source>
</evidence>
<evidence type="ECO:0000269" key="2">
    <source>
    </source>
</evidence>
<feature type="chain" id="PRO_0000304017" description="Uncharacterized protein C24B10.03">
    <location>
        <begin position="1"/>
        <end position="128"/>
    </location>
</feature>
<feature type="region of interest" description="Disordered" evidence="1">
    <location>
        <begin position="1"/>
        <end position="30"/>
    </location>
</feature>
<feature type="compositionally biased region" description="Basic and acidic residues" evidence="1">
    <location>
        <begin position="1"/>
        <end position="28"/>
    </location>
</feature>
<accession>Q9P7K2</accession>
<proteinExistence type="predicted"/>
<reference key="1">
    <citation type="journal article" date="2002" name="Nature">
        <title>The genome sequence of Schizosaccharomyces pombe.</title>
        <authorList>
            <person name="Wood V."/>
            <person name="Gwilliam R."/>
            <person name="Rajandream M.A."/>
            <person name="Lyne M.H."/>
            <person name="Lyne R."/>
            <person name="Stewart A."/>
            <person name="Sgouros J.G."/>
            <person name="Peat N."/>
            <person name="Hayles J."/>
            <person name="Baker S.G."/>
            <person name="Basham D."/>
            <person name="Bowman S."/>
            <person name="Brooks K."/>
            <person name="Brown D."/>
            <person name="Brown S."/>
            <person name="Chillingworth T."/>
            <person name="Churcher C.M."/>
            <person name="Collins M."/>
            <person name="Connor R."/>
            <person name="Cronin A."/>
            <person name="Davis P."/>
            <person name="Feltwell T."/>
            <person name="Fraser A."/>
            <person name="Gentles S."/>
            <person name="Goble A."/>
            <person name="Hamlin N."/>
            <person name="Harris D.E."/>
            <person name="Hidalgo J."/>
            <person name="Hodgson G."/>
            <person name="Holroyd S."/>
            <person name="Hornsby T."/>
            <person name="Howarth S."/>
            <person name="Huckle E.J."/>
            <person name="Hunt S."/>
            <person name="Jagels K."/>
            <person name="James K.D."/>
            <person name="Jones L."/>
            <person name="Jones M."/>
            <person name="Leather S."/>
            <person name="McDonald S."/>
            <person name="McLean J."/>
            <person name="Mooney P."/>
            <person name="Moule S."/>
            <person name="Mungall K.L."/>
            <person name="Murphy L.D."/>
            <person name="Niblett D."/>
            <person name="Odell C."/>
            <person name="Oliver K."/>
            <person name="O'Neil S."/>
            <person name="Pearson D."/>
            <person name="Quail M.A."/>
            <person name="Rabbinowitsch E."/>
            <person name="Rutherford K.M."/>
            <person name="Rutter S."/>
            <person name="Saunders D."/>
            <person name="Seeger K."/>
            <person name="Sharp S."/>
            <person name="Skelton J."/>
            <person name="Simmonds M.N."/>
            <person name="Squares R."/>
            <person name="Squares S."/>
            <person name="Stevens K."/>
            <person name="Taylor K."/>
            <person name="Taylor R.G."/>
            <person name="Tivey A."/>
            <person name="Walsh S.V."/>
            <person name="Warren T."/>
            <person name="Whitehead S."/>
            <person name="Woodward J.R."/>
            <person name="Volckaert G."/>
            <person name="Aert R."/>
            <person name="Robben J."/>
            <person name="Grymonprez B."/>
            <person name="Weltjens I."/>
            <person name="Vanstreels E."/>
            <person name="Rieger M."/>
            <person name="Schaefer M."/>
            <person name="Mueller-Auer S."/>
            <person name="Gabel C."/>
            <person name="Fuchs M."/>
            <person name="Duesterhoeft A."/>
            <person name="Fritzc C."/>
            <person name="Holzer E."/>
            <person name="Moestl D."/>
            <person name="Hilbert H."/>
            <person name="Borzym K."/>
            <person name="Langer I."/>
            <person name="Beck A."/>
            <person name="Lehrach H."/>
            <person name="Reinhardt R."/>
            <person name="Pohl T.M."/>
            <person name="Eger P."/>
            <person name="Zimmermann W."/>
            <person name="Wedler H."/>
            <person name="Wambutt R."/>
            <person name="Purnelle B."/>
            <person name="Goffeau A."/>
            <person name="Cadieu E."/>
            <person name="Dreano S."/>
            <person name="Gloux S."/>
            <person name="Lelaure V."/>
            <person name="Mottier S."/>
            <person name="Galibert F."/>
            <person name="Aves S.J."/>
            <person name="Xiang Z."/>
            <person name="Hunt C."/>
            <person name="Moore K."/>
            <person name="Hurst S.M."/>
            <person name="Lucas M."/>
            <person name="Rochet M."/>
            <person name="Gaillardin C."/>
            <person name="Tallada V.A."/>
            <person name="Garzon A."/>
            <person name="Thode G."/>
            <person name="Daga R.R."/>
            <person name="Cruzado L."/>
            <person name="Jimenez J."/>
            <person name="Sanchez M."/>
            <person name="del Rey F."/>
            <person name="Benito J."/>
            <person name="Dominguez A."/>
            <person name="Revuelta J.L."/>
            <person name="Moreno S."/>
            <person name="Armstrong J."/>
            <person name="Forsburg S.L."/>
            <person name="Cerutti L."/>
            <person name="Lowe T."/>
            <person name="McCombie W.R."/>
            <person name="Paulsen I."/>
            <person name="Potashkin J."/>
            <person name="Shpakovski G.V."/>
            <person name="Ussery D."/>
            <person name="Barrell B.G."/>
            <person name="Nurse P."/>
        </authorList>
    </citation>
    <scope>NUCLEOTIDE SEQUENCE [LARGE SCALE GENOMIC DNA]</scope>
    <source>
        <strain>972 / ATCC 24843</strain>
    </source>
</reference>
<reference key="2">
    <citation type="journal article" date="2006" name="Nat. Biotechnol.">
        <title>ORFeome cloning and global analysis of protein localization in the fission yeast Schizosaccharomyces pombe.</title>
        <authorList>
            <person name="Matsuyama A."/>
            <person name="Arai R."/>
            <person name="Yashiroda Y."/>
            <person name="Shirai A."/>
            <person name="Kamata A."/>
            <person name="Sekido S."/>
            <person name="Kobayashi Y."/>
            <person name="Hashimoto A."/>
            <person name="Hamamoto M."/>
            <person name="Hiraoka Y."/>
            <person name="Horinouchi S."/>
            <person name="Yoshida M."/>
        </authorList>
    </citation>
    <scope>SUBCELLULAR LOCATION [LARGE SCALE ANALYSIS]</scope>
</reference>
<organism>
    <name type="scientific">Schizosaccharomyces pombe (strain 972 / ATCC 24843)</name>
    <name type="common">Fission yeast</name>
    <dbReference type="NCBI Taxonomy" id="284812"/>
    <lineage>
        <taxon>Eukaryota</taxon>
        <taxon>Fungi</taxon>
        <taxon>Dikarya</taxon>
        <taxon>Ascomycota</taxon>
        <taxon>Taphrinomycotina</taxon>
        <taxon>Schizosaccharomycetes</taxon>
        <taxon>Schizosaccharomycetales</taxon>
        <taxon>Schizosaccharomycetaceae</taxon>
        <taxon>Schizosaccharomyces</taxon>
    </lineage>
</organism>
<sequence length="128" mass="14595">MDADDFGKKDLENGNESPKKPIFMKDWKNSQPNEQGRWLHLDARMNRNIEDLEISNYNLRLMNEQLESQLLSLNVKPVVSFAEQGKSSESKTDEEGFILNSASNVLDNFISIVNELVQHAEDVLDDLG</sequence>
<keyword id="KW-0963">Cytoplasm</keyword>
<keyword id="KW-0539">Nucleus</keyword>
<keyword id="KW-1185">Reference proteome</keyword>
<comment type="subcellular location">
    <subcellularLocation>
        <location evidence="2">Cytoplasm</location>
    </subcellularLocation>
    <subcellularLocation>
        <location evidence="2">Nucleus</location>
    </subcellularLocation>
</comment>
<dbReference type="EMBL" id="CU329672">
    <property type="protein sequence ID" value="CAB76212.1"/>
    <property type="molecule type" value="Genomic_DNA"/>
</dbReference>
<dbReference type="PIR" id="T50410">
    <property type="entry name" value="T50410"/>
</dbReference>
<dbReference type="RefSeq" id="NP_588006.1">
    <property type="nucleotide sequence ID" value="NM_001022997.2"/>
</dbReference>
<dbReference type="SMR" id="Q9P7K2"/>
<dbReference type="BioGRID" id="275510">
    <property type="interactions" value="1"/>
</dbReference>
<dbReference type="iPTMnet" id="Q9P7K2"/>
<dbReference type="PaxDb" id="4896-SPCC24B10.03.1"/>
<dbReference type="EnsemblFungi" id="SPCC24B10.03.1">
    <property type="protein sequence ID" value="SPCC24B10.03.1:pep"/>
    <property type="gene ID" value="SPCC24B10.03"/>
</dbReference>
<dbReference type="KEGG" id="spo:2538934"/>
<dbReference type="PomBase" id="SPCC24B10.03"/>
<dbReference type="VEuPathDB" id="FungiDB:SPCC24B10.03"/>
<dbReference type="HOGENOM" id="CLU_1971786_0_0_1"/>
<dbReference type="InParanoid" id="Q9P7K2"/>
<dbReference type="OMA" id="MNEWKHP"/>
<dbReference type="PRO" id="PR:Q9P7K2"/>
<dbReference type="Proteomes" id="UP000002485">
    <property type="component" value="Chromosome III"/>
</dbReference>
<dbReference type="GO" id="GO:0005737">
    <property type="term" value="C:cytoplasm"/>
    <property type="evidence" value="ECO:0007005"/>
    <property type="project" value="PomBase"/>
</dbReference>
<dbReference type="GO" id="GO:0005829">
    <property type="term" value="C:cytosol"/>
    <property type="evidence" value="ECO:0007005"/>
    <property type="project" value="PomBase"/>
</dbReference>
<dbReference type="GO" id="GO:0005634">
    <property type="term" value="C:nucleus"/>
    <property type="evidence" value="ECO:0007005"/>
    <property type="project" value="PomBase"/>
</dbReference>
<gene>
    <name type="ORF">SPCC24B10.03</name>
</gene>
<name>YJN3_SCHPO</name>
<protein>
    <recommendedName>
        <fullName>Uncharacterized protein C24B10.03</fullName>
    </recommendedName>
</protein>